<gene>
    <name evidence="1" type="primary">gcvT</name>
    <name type="ordered locus">Smlt3658</name>
</gene>
<comment type="function">
    <text evidence="1">The glycine cleavage system catalyzes the degradation of glycine.</text>
</comment>
<comment type="catalytic activity">
    <reaction evidence="1">
        <text>N(6)-[(R)-S(8)-aminomethyldihydrolipoyl]-L-lysyl-[protein] + (6S)-5,6,7,8-tetrahydrofolate = N(6)-[(R)-dihydrolipoyl]-L-lysyl-[protein] + (6R)-5,10-methylene-5,6,7,8-tetrahydrofolate + NH4(+)</text>
        <dbReference type="Rhea" id="RHEA:16945"/>
        <dbReference type="Rhea" id="RHEA-COMP:10475"/>
        <dbReference type="Rhea" id="RHEA-COMP:10492"/>
        <dbReference type="ChEBI" id="CHEBI:15636"/>
        <dbReference type="ChEBI" id="CHEBI:28938"/>
        <dbReference type="ChEBI" id="CHEBI:57453"/>
        <dbReference type="ChEBI" id="CHEBI:83100"/>
        <dbReference type="ChEBI" id="CHEBI:83143"/>
        <dbReference type="EC" id="2.1.2.10"/>
    </reaction>
</comment>
<comment type="subunit">
    <text evidence="1">The glycine cleavage system is composed of four proteins: P, T, L and H.</text>
</comment>
<comment type="similarity">
    <text evidence="1">Belongs to the GcvT family.</text>
</comment>
<evidence type="ECO:0000255" key="1">
    <source>
        <dbReference type="HAMAP-Rule" id="MF_00259"/>
    </source>
</evidence>
<sequence>MTQKTLLNDTHRALGAKMVDFGGWDMPIHYGSQLDEHHLVRRESGVFDVSHMTVVDLRGDQVRPFLRRLLANSVDKLKVPGKALYSCMLNPRGGVIDDLIVYYLGDDFFRMVVNASTREKDLAWLREQAAPFGVSVEQRPDLAILAVQGPQARAIVIGLARESEREALTKLGRFAALQVQSDDGVELFVARTGYTGEDGFEILLPQDAVVAFWNRLLAAGVKPAGLGARDTLRLEAGMNLYGQDMDEEISPYEAALAWTVSLDEGRDFIGRDALEAQKAAGTARQMIGLVMDEKGVLRHGQAVTTAGGQGEILSGTFSPTLAKGIAFARVPAGELGEVTVDIRGRQVPVRVVKFPFVREGQAQPGVLADA</sequence>
<keyword id="KW-0032">Aminotransferase</keyword>
<keyword id="KW-1185">Reference proteome</keyword>
<keyword id="KW-0808">Transferase</keyword>
<proteinExistence type="inferred from homology"/>
<accession>B2FR21</accession>
<reference key="1">
    <citation type="journal article" date="2008" name="Genome Biol.">
        <title>The complete genome, comparative and functional analysis of Stenotrophomonas maltophilia reveals an organism heavily shielded by drug resistance determinants.</title>
        <authorList>
            <person name="Crossman L.C."/>
            <person name="Gould V.C."/>
            <person name="Dow J.M."/>
            <person name="Vernikos G.S."/>
            <person name="Okazaki A."/>
            <person name="Sebaihia M."/>
            <person name="Saunders D."/>
            <person name="Arrowsmith C."/>
            <person name="Carver T."/>
            <person name="Peters N."/>
            <person name="Adlem E."/>
            <person name="Kerhornou A."/>
            <person name="Lord A."/>
            <person name="Murphy L."/>
            <person name="Seeger K."/>
            <person name="Squares R."/>
            <person name="Rutter S."/>
            <person name="Quail M.A."/>
            <person name="Rajandream M.A."/>
            <person name="Harris D."/>
            <person name="Churcher C."/>
            <person name="Bentley S.D."/>
            <person name="Parkhill J."/>
            <person name="Thomson N.R."/>
            <person name="Avison M.B."/>
        </authorList>
    </citation>
    <scope>NUCLEOTIDE SEQUENCE [LARGE SCALE GENOMIC DNA]</scope>
    <source>
        <strain>K279a</strain>
    </source>
</reference>
<protein>
    <recommendedName>
        <fullName evidence="1">Aminomethyltransferase</fullName>
        <ecNumber evidence="1">2.1.2.10</ecNumber>
    </recommendedName>
    <alternativeName>
        <fullName evidence="1">Glycine cleavage system T protein</fullName>
    </alternativeName>
</protein>
<organism>
    <name type="scientific">Stenotrophomonas maltophilia (strain K279a)</name>
    <dbReference type="NCBI Taxonomy" id="522373"/>
    <lineage>
        <taxon>Bacteria</taxon>
        <taxon>Pseudomonadati</taxon>
        <taxon>Pseudomonadota</taxon>
        <taxon>Gammaproteobacteria</taxon>
        <taxon>Lysobacterales</taxon>
        <taxon>Lysobacteraceae</taxon>
        <taxon>Stenotrophomonas</taxon>
        <taxon>Stenotrophomonas maltophilia group</taxon>
    </lineage>
</organism>
<feature type="chain" id="PRO_1000114120" description="Aminomethyltransferase">
    <location>
        <begin position="1"/>
        <end position="370"/>
    </location>
</feature>
<name>GCST_STRMK</name>
<dbReference type="EC" id="2.1.2.10" evidence="1"/>
<dbReference type="EMBL" id="AM743169">
    <property type="protein sequence ID" value="CAQ47074.1"/>
    <property type="molecule type" value="Genomic_DNA"/>
</dbReference>
<dbReference type="RefSeq" id="WP_012481037.1">
    <property type="nucleotide sequence ID" value="NC_010943.1"/>
</dbReference>
<dbReference type="SMR" id="B2FR21"/>
<dbReference type="EnsemblBacteria" id="CAQ47074">
    <property type="protein sequence ID" value="CAQ47074"/>
    <property type="gene ID" value="Smlt3658"/>
</dbReference>
<dbReference type="KEGG" id="sml:Smlt3658"/>
<dbReference type="PATRIC" id="fig|522373.3.peg.3437"/>
<dbReference type="eggNOG" id="COG0404">
    <property type="taxonomic scope" value="Bacteria"/>
</dbReference>
<dbReference type="HOGENOM" id="CLU_007884_10_2_6"/>
<dbReference type="Proteomes" id="UP000008840">
    <property type="component" value="Chromosome"/>
</dbReference>
<dbReference type="GO" id="GO:0005829">
    <property type="term" value="C:cytosol"/>
    <property type="evidence" value="ECO:0007669"/>
    <property type="project" value="TreeGrafter"/>
</dbReference>
<dbReference type="GO" id="GO:0005960">
    <property type="term" value="C:glycine cleavage complex"/>
    <property type="evidence" value="ECO:0007669"/>
    <property type="project" value="InterPro"/>
</dbReference>
<dbReference type="GO" id="GO:0004047">
    <property type="term" value="F:aminomethyltransferase activity"/>
    <property type="evidence" value="ECO:0007669"/>
    <property type="project" value="UniProtKB-UniRule"/>
</dbReference>
<dbReference type="GO" id="GO:0008483">
    <property type="term" value="F:transaminase activity"/>
    <property type="evidence" value="ECO:0007669"/>
    <property type="project" value="UniProtKB-KW"/>
</dbReference>
<dbReference type="GO" id="GO:0019464">
    <property type="term" value="P:glycine decarboxylation via glycine cleavage system"/>
    <property type="evidence" value="ECO:0007669"/>
    <property type="project" value="UniProtKB-UniRule"/>
</dbReference>
<dbReference type="FunFam" id="2.40.30.110:FF:000001">
    <property type="entry name" value="Aminomethyltransferase"/>
    <property type="match status" value="1"/>
</dbReference>
<dbReference type="FunFam" id="3.30.70.1400:FF:000001">
    <property type="entry name" value="Aminomethyltransferase"/>
    <property type="match status" value="1"/>
</dbReference>
<dbReference type="FunFam" id="4.10.1250.10:FF:000001">
    <property type="entry name" value="Aminomethyltransferase"/>
    <property type="match status" value="1"/>
</dbReference>
<dbReference type="Gene3D" id="2.40.30.110">
    <property type="entry name" value="Aminomethyltransferase beta-barrel domains"/>
    <property type="match status" value="1"/>
</dbReference>
<dbReference type="Gene3D" id="3.30.70.1400">
    <property type="entry name" value="Aminomethyltransferase beta-barrel domains"/>
    <property type="match status" value="1"/>
</dbReference>
<dbReference type="Gene3D" id="4.10.1250.10">
    <property type="entry name" value="Aminomethyltransferase fragment"/>
    <property type="match status" value="1"/>
</dbReference>
<dbReference type="Gene3D" id="3.30.1360.120">
    <property type="entry name" value="Probable tRNA modification gtpase trme, domain 1"/>
    <property type="match status" value="1"/>
</dbReference>
<dbReference type="HAMAP" id="MF_00259">
    <property type="entry name" value="GcvT"/>
    <property type="match status" value="1"/>
</dbReference>
<dbReference type="InterPro" id="IPR006223">
    <property type="entry name" value="GCS_T"/>
</dbReference>
<dbReference type="InterPro" id="IPR022903">
    <property type="entry name" value="GCS_T_bac"/>
</dbReference>
<dbReference type="InterPro" id="IPR013977">
    <property type="entry name" value="GCST_C"/>
</dbReference>
<dbReference type="InterPro" id="IPR006222">
    <property type="entry name" value="GCV_T_N"/>
</dbReference>
<dbReference type="InterPro" id="IPR028896">
    <property type="entry name" value="GcvT/YgfZ/DmdA"/>
</dbReference>
<dbReference type="InterPro" id="IPR029043">
    <property type="entry name" value="GcvT/YgfZ_C"/>
</dbReference>
<dbReference type="InterPro" id="IPR027266">
    <property type="entry name" value="TrmE/GcvT_dom1"/>
</dbReference>
<dbReference type="NCBIfam" id="TIGR00528">
    <property type="entry name" value="gcvT"/>
    <property type="match status" value="1"/>
</dbReference>
<dbReference type="NCBIfam" id="NF001567">
    <property type="entry name" value="PRK00389.1"/>
    <property type="match status" value="1"/>
</dbReference>
<dbReference type="PANTHER" id="PTHR43757">
    <property type="entry name" value="AMINOMETHYLTRANSFERASE"/>
    <property type="match status" value="1"/>
</dbReference>
<dbReference type="PANTHER" id="PTHR43757:SF2">
    <property type="entry name" value="AMINOMETHYLTRANSFERASE, MITOCHONDRIAL"/>
    <property type="match status" value="1"/>
</dbReference>
<dbReference type="Pfam" id="PF01571">
    <property type="entry name" value="GCV_T"/>
    <property type="match status" value="1"/>
</dbReference>
<dbReference type="Pfam" id="PF08669">
    <property type="entry name" value="GCV_T_C"/>
    <property type="match status" value="1"/>
</dbReference>
<dbReference type="PIRSF" id="PIRSF006487">
    <property type="entry name" value="GcvT"/>
    <property type="match status" value="1"/>
</dbReference>
<dbReference type="SUPFAM" id="SSF101790">
    <property type="entry name" value="Aminomethyltransferase beta-barrel domain"/>
    <property type="match status" value="1"/>
</dbReference>
<dbReference type="SUPFAM" id="SSF103025">
    <property type="entry name" value="Folate-binding domain"/>
    <property type="match status" value="1"/>
</dbReference>